<name>TRP6_PYRAP</name>
<keyword id="KW-0903">Direct protein sequencing</keyword>
<keyword id="KW-0527">Neuropeptide</keyword>
<keyword id="KW-0964">Secreted</keyword>
<dbReference type="GO" id="GO:0005576">
    <property type="term" value="C:extracellular region"/>
    <property type="evidence" value="ECO:0007005"/>
    <property type="project" value="UniProtKB"/>
</dbReference>
<dbReference type="GO" id="GO:0007218">
    <property type="term" value="P:neuropeptide signaling pathway"/>
    <property type="evidence" value="ECO:0007669"/>
    <property type="project" value="UniProtKB-KW"/>
</dbReference>
<protein>
    <recommendedName>
        <fullName evidence="2">Tachykinin-related peptide 6</fullName>
        <shortName evidence="2">TKRP-6</shortName>
    </recommendedName>
</protein>
<evidence type="ECO:0000269" key="1">
    <source>
    </source>
</evidence>
<evidence type="ECO:0000303" key="2">
    <source>
    </source>
</evidence>
<evidence type="ECO:0000305" key="3"/>
<sequence length="11" mass="1171">APSSMGFMGMR</sequence>
<organism>
    <name type="scientific">Pyrrhocoris apterus</name>
    <name type="common">Sap sucking bug</name>
    <name type="synonym">Cimex apterus</name>
    <dbReference type="NCBI Taxonomy" id="37000"/>
    <lineage>
        <taxon>Eukaryota</taxon>
        <taxon>Metazoa</taxon>
        <taxon>Ecdysozoa</taxon>
        <taxon>Arthropoda</taxon>
        <taxon>Hexapoda</taxon>
        <taxon>Insecta</taxon>
        <taxon>Pterygota</taxon>
        <taxon>Neoptera</taxon>
        <taxon>Paraneoptera</taxon>
        <taxon>Hemiptera</taxon>
        <taxon>Heteroptera</taxon>
        <taxon>Panheteroptera</taxon>
        <taxon>Pentatomomorpha</taxon>
        <taxon>Pyrrhocoroidea</taxon>
        <taxon>Pyrrhocoridae</taxon>
        <taxon>Pyrrhocoris</taxon>
    </lineage>
</organism>
<reference evidence="3" key="1">
    <citation type="journal article" date="2009" name="Peptides">
        <title>Neuropeptides in Heteroptera: identification of allatotropin-related peptide and tachykinin-related peptides using MALDI-TOF mass spectrometry.</title>
        <authorList>
            <person name="Neupert S."/>
            <person name="Russell W.K."/>
            <person name="Russell D.H."/>
            <person name="Lopez J.D. Jr."/>
            <person name="Predel R."/>
            <person name="Nachman R.J."/>
        </authorList>
    </citation>
    <scope>PROTEIN SEQUENCE</scope>
    <scope>SUBCELLULAR LOCATION</scope>
    <scope>TISSUE SPECIFICITY</scope>
    <source>
        <tissue evidence="1">Antennal lobe</tissue>
    </source>
</reference>
<proteinExistence type="evidence at protein level"/>
<comment type="subcellular location">
    <subcellularLocation>
        <location evidence="1 3">Secreted</location>
    </subcellularLocation>
</comment>
<comment type="tissue specificity">
    <text evidence="1">Expressed in the antennal lobe (at protein level).</text>
</comment>
<feature type="peptide" id="PRO_0000395667" description="Tachykinin-related peptide 6" evidence="1">
    <location>
        <begin position="1"/>
        <end position="11"/>
    </location>
</feature>
<accession>P86593</accession>